<accession>Q6P1L6</accession>
<accession>Q5JXU8</accession>
<accession>Q5JXU9</accession>
<accession>Q8N8F2</accession>
<accession>Q96EX8</accession>
<accession>Q96NA5</accession>
<accession>Q9BQB0</accession>
<proteinExistence type="evidence at protein level"/>
<sequence length="599" mass="69220">MMLPYPSALGDQYWEEILLPKNGENVETMKKLTQNHKAKGLPSNDTDCPQKKEGKAQIVVPVTFRDVTVIFTEAEWKRLSPEQRNLYKEVMLENYRNLLSLAEPKPEIYTCSSCLLAFSCQQFLSQHVLQIFLGLCAENHFHPGNSSPGHWKQQGQQYSHVSCWFENAEGQERGGGSKPWSARTEERETSRAFPSPLQRQSASPRKGNMVVETEPSSAQRPNPVQLDKGLKELETLRFGAINCREYEPDHNLESNFITNPRTLLGKKPYICSDCGRSFKDRSTLIRHHRIHSMEKPYVCSECGRGFSQKSNLSRHQRTHSEEKPYLCRECGQSFRSKSILNRHQWTHSEEKPYVCSECGRGFSEKSSFIRHQRTHSGEKPYVCLECGRSFCDKSTLRKHQRIHSGEKPYVCRECGRGFSQNSDLIKHQRTHLDEKPYVCRECGRGFCDKSTLIIHERTHSGEKPYVCGECGRGFSRKSLLLVHQRTHSGEKHYVCRECRRGFSQKSNLIRHQRTHSNEKPYICRECGRGFCDKSTLIVHERTHSGEKPYVCSECGRGFSRKSLLLVHQRTHSGEKHYVCRECGRGFSHKSNLIRHQRTH</sequence>
<feature type="chain" id="PRO_0000047543" description="Zinc finger protein 343">
    <location>
        <begin position="1"/>
        <end position="599"/>
    </location>
</feature>
<feature type="domain" description="KRAB" evidence="2">
    <location>
        <begin position="62"/>
        <end position="139"/>
    </location>
</feature>
<feature type="zinc finger region" description="C2H2-type 1" evidence="1">
    <location>
        <begin position="269"/>
        <end position="291"/>
    </location>
</feature>
<feature type="zinc finger region" description="C2H2-type 2" evidence="1">
    <location>
        <begin position="297"/>
        <end position="319"/>
    </location>
</feature>
<feature type="zinc finger region" description="C2H2-type 3" evidence="1">
    <location>
        <begin position="325"/>
        <end position="347"/>
    </location>
</feature>
<feature type="zinc finger region" description="C2H2-type 4" evidence="1">
    <location>
        <begin position="353"/>
        <end position="375"/>
    </location>
</feature>
<feature type="zinc finger region" description="C2H2-type 5" evidence="1">
    <location>
        <begin position="381"/>
        <end position="403"/>
    </location>
</feature>
<feature type="zinc finger region" description="C2H2-type 6" evidence="1">
    <location>
        <begin position="409"/>
        <end position="431"/>
    </location>
</feature>
<feature type="zinc finger region" description="C2H2-type 7" evidence="1">
    <location>
        <begin position="437"/>
        <end position="459"/>
    </location>
</feature>
<feature type="zinc finger region" description="C2H2-type 8" evidence="1">
    <location>
        <begin position="465"/>
        <end position="487"/>
    </location>
</feature>
<feature type="zinc finger region" description="C2H2-type 9" evidence="1">
    <location>
        <begin position="493"/>
        <end position="515"/>
    </location>
</feature>
<feature type="zinc finger region" description="C2H2-type 10" evidence="1">
    <location>
        <begin position="521"/>
        <end position="543"/>
    </location>
</feature>
<feature type="zinc finger region" description="C2H2-type 11" evidence="1">
    <location>
        <begin position="549"/>
        <end position="571"/>
    </location>
</feature>
<feature type="zinc finger region" description="C2H2-type 12" evidence="1">
    <location>
        <begin position="577"/>
        <end position="599"/>
    </location>
</feature>
<feature type="region of interest" description="Disordered" evidence="3">
    <location>
        <begin position="169"/>
        <end position="224"/>
    </location>
</feature>
<feature type="cross-link" description="Glycyl lysine isopeptide (Lys-Gly) (interchain with G-Cter in SUMO2)" evidence="7">
    <location>
        <position position="435"/>
    </location>
</feature>
<feature type="splice variant" id="VSP_016028" description="In isoform 2." evidence="4">
    <location>
        <begin position="1"/>
        <end position="90"/>
    </location>
</feature>
<feature type="splice variant" id="VSP_016029" description="In isoform 3." evidence="5">
    <original>AEPKPEIYTCSSCLLAF</original>
    <variation>GQEIETILANIVKSHLY</variation>
    <location>
        <begin position="102"/>
        <end position="118"/>
    </location>
</feature>
<feature type="splice variant" id="VSP_016030" description="In isoform 3." evidence="5">
    <location>
        <begin position="119"/>
        <end position="599"/>
    </location>
</feature>
<feature type="sequence variant" id="VAR_059912" description="In dbSNP:rs6049415.">
    <original>P</original>
    <variation>L</variation>
    <location>
        <position position="520"/>
    </location>
</feature>
<feature type="sequence conflict" description="In Ref. 1; BAC04892." evidence="6" ref="1">
    <original>F</original>
    <variation>S</variation>
    <location>
        <position position="418"/>
    </location>
</feature>
<protein>
    <recommendedName>
        <fullName>Zinc finger protein 343</fullName>
    </recommendedName>
</protein>
<evidence type="ECO:0000255" key="1">
    <source>
        <dbReference type="PROSITE-ProRule" id="PRU00042"/>
    </source>
</evidence>
<evidence type="ECO:0000255" key="2">
    <source>
        <dbReference type="PROSITE-ProRule" id="PRU00119"/>
    </source>
</evidence>
<evidence type="ECO:0000256" key="3">
    <source>
        <dbReference type="SAM" id="MobiDB-lite"/>
    </source>
</evidence>
<evidence type="ECO:0000303" key="4">
    <source>
    </source>
</evidence>
<evidence type="ECO:0000303" key="5">
    <source>
    </source>
</evidence>
<evidence type="ECO:0000305" key="6"/>
<evidence type="ECO:0007744" key="7">
    <source>
    </source>
</evidence>
<comment type="function">
    <text>May be involved in transcriptional regulation.</text>
</comment>
<comment type="interaction">
    <interactant intactId="EBI-10252492">
        <id>Q6P1L6</id>
    </interactant>
    <interactant intactId="EBI-2880652">
        <id>Q08043</id>
        <label>ACTN3</label>
    </interactant>
    <organismsDiffer>false</organismsDiffer>
    <experiments>3</experiments>
</comment>
<comment type="interaction">
    <interactant intactId="EBI-10252492">
        <id>Q6P1L6</id>
    </interactant>
    <interactant intactId="EBI-10229433">
        <id>Q13515</id>
        <label>BFSP2</label>
    </interactant>
    <organismsDiffer>false</organismsDiffer>
    <experiments>3</experiments>
</comment>
<comment type="interaction">
    <interactant intactId="EBI-10252492">
        <id>Q6P1L6</id>
    </interactant>
    <interactant intactId="EBI-11977221">
        <id>Q86Z20</id>
        <label>CCDC125</label>
    </interactant>
    <organismsDiffer>false</organismsDiffer>
    <experiments>3</experiments>
</comment>
<comment type="interaction">
    <interactant intactId="EBI-10252492">
        <id>Q6P1L6</id>
    </interactant>
    <interactant intactId="EBI-6658203">
        <id>Q86YD7</id>
        <label>FAM90A1</label>
    </interactant>
    <organismsDiffer>false</organismsDiffer>
    <experiments>3</experiments>
</comment>
<comment type="interaction">
    <interactant intactId="EBI-10252492">
        <id>Q6P1L6</id>
    </interactant>
    <interactant intactId="EBI-17181882">
        <id>O75564-2</id>
        <label>JRK</label>
    </interactant>
    <organismsDiffer>false</organismsDiffer>
    <experiments>3</experiments>
</comment>
<comment type="interaction">
    <interactant intactId="EBI-10252492">
        <id>Q6P1L6</id>
    </interactant>
    <interactant intactId="EBI-949319">
        <id>Q9NSK0</id>
        <label>KLC4</label>
    </interactant>
    <organismsDiffer>false</organismsDiffer>
    <experiments>3</experiments>
</comment>
<comment type="interaction">
    <interactant intactId="EBI-10252492">
        <id>Q6P1L6</id>
    </interactant>
    <interactant intactId="EBI-11750983">
        <id>Q9HC98-4</id>
        <label>NEK6</label>
    </interactant>
    <organismsDiffer>false</organismsDiffer>
    <experiments>3</experiments>
</comment>
<comment type="interaction">
    <interactant intactId="EBI-10252492">
        <id>Q6P1L6</id>
    </interactant>
    <interactant intactId="EBI-744782">
        <id>Q9Y5B8</id>
        <label>NME7</label>
    </interactant>
    <organismsDiffer>false</organismsDiffer>
    <experiments>3</experiments>
</comment>
<comment type="interaction">
    <interactant intactId="EBI-10252492">
        <id>Q6P1L6</id>
    </interactant>
    <interactant intactId="EBI-10297093">
        <id>Q9BRQ3</id>
        <label>NUDT22</label>
    </interactant>
    <organismsDiffer>false</organismsDiffer>
    <experiments>3</experiments>
</comment>
<comment type="interaction">
    <interactant intactId="EBI-10252492">
        <id>Q6P1L6</id>
    </interactant>
    <interactant intactId="EBI-398874">
        <id>Q9UBU9</id>
        <label>NXF1</label>
    </interactant>
    <organismsDiffer>false</organismsDiffer>
    <experiments>3</experiments>
</comment>
<comment type="interaction">
    <interactant intactId="EBI-10252492">
        <id>Q6P1L6</id>
    </interactant>
    <interactant intactId="EBI-12111000">
        <id>P55771</id>
        <label>PAX9</label>
    </interactant>
    <organismsDiffer>false</organismsDiffer>
    <experiments>3</experiments>
</comment>
<comment type="interaction">
    <interactant intactId="EBI-10252492">
        <id>Q6P1L6</id>
    </interactant>
    <interactant intactId="EBI-1055693">
        <id>O75771</id>
        <label>RAD51D</label>
    </interactant>
    <organismsDiffer>false</organismsDiffer>
    <experiments>3</experiments>
</comment>
<comment type="interaction">
    <interactant intactId="EBI-10252492">
        <id>Q6P1L6</id>
    </interactant>
    <interactant intactId="EBI-11984663">
        <id>Q06455-2</id>
        <label>RUNX1T1</label>
    </interactant>
    <organismsDiffer>false</organismsDiffer>
    <experiments>3</experiments>
</comment>
<comment type="interaction">
    <interactant intactId="EBI-10252492">
        <id>Q6P1L6</id>
    </interactant>
    <interactant intactId="EBI-727004">
        <id>O00560</id>
        <label>SDCBP</label>
    </interactant>
    <organismsDiffer>false</organismsDiffer>
    <experiments>3</experiments>
</comment>
<comment type="interaction">
    <interactant intactId="EBI-10252492">
        <id>Q6P1L6</id>
    </interactant>
    <interactant intactId="EBI-749295">
        <id>O75716</id>
        <label>STK16</label>
    </interactant>
    <organismsDiffer>false</organismsDiffer>
    <experiments>3</experiments>
</comment>
<comment type="interaction">
    <interactant intactId="EBI-10252492">
        <id>Q6P1L6</id>
    </interactant>
    <interactant intactId="EBI-11139477">
        <id>Q96N21</id>
        <label>TEPSIN</label>
    </interactant>
    <organismsDiffer>false</organismsDiffer>
    <experiments>3</experiments>
</comment>
<comment type="interaction">
    <interactant intactId="EBI-10252492">
        <id>Q6P1L6</id>
    </interactant>
    <interactant intactId="EBI-725997">
        <id>Q8WV44</id>
        <label>TRIM41</label>
    </interactant>
    <organismsDiffer>false</organismsDiffer>
    <experiments>3</experiments>
</comment>
<comment type="interaction">
    <interactant intactId="EBI-10252492">
        <id>Q6P1L6</id>
    </interactant>
    <interactant intactId="EBI-741480">
        <id>Q9UMX0</id>
        <label>UBQLN1</label>
    </interactant>
    <organismsDiffer>false</organismsDiffer>
    <experiments>3</experiments>
</comment>
<comment type="interaction">
    <interactant intactId="EBI-10252492">
        <id>Q6P1L6</id>
    </interactant>
    <interactant intactId="EBI-2511991">
        <id>Q9Y2K6</id>
        <label>USP20</label>
    </interactant>
    <organismsDiffer>false</organismsDiffer>
    <experiments>3</experiments>
</comment>
<comment type="interaction">
    <interactant intactId="EBI-10252492">
        <id>Q6P1L6</id>
    </interactant>
    <interactant intactId="EBI-11993110">
        <id>Q9P2F9</id>
        <label>ZNF319</label>
    </interactant>
    <organismsDiffer>false</organismsDiffer>
    <experiments>3</experiments>
</comment>
<comment type="interaction">
    <interactant intactId="EBI-10252492">
        <id>Q6P1L6</id>
    </interactant>
    <interactant intactId="EBI-11985915">
        <id>Q5T619</id>
        <label>ZNF648</label>
    </interactant>
    <organismsDiffer>false</organismsDiffer>
    <experiments>3</experiments>
</comment>
<comment type="interaction">
    <interactant intactId="EBI-10252492">
        <id>Q6P1L6</id>
    </interactant>
    <interactant intactId="EBI-5667516">
        <id>Q9Y2P0</id>
        <label>ZNF835</label>
    </interactant>
    <organismsDiffer>false</organismsDiffer>
    <experiments>3</experiments>
</comment>
<comment type="interaction">
    <interactant intactId="EBI-25932668">
        <id>Q6P1L6-3</id>
    </interactant>
    <interactant intactId="EBI-5235340">
        <id>Q7Z699</id>
        <label>SPRED1</label>
    </interactant>
    <organismsDiffer>false</organismsDiffer>
    <experiments>3</experiments>
</comment>
<comment type="subcellular location">
    <subcellularLocation>
        <location evidence="6">Nucleus</location>
    </subcellularLocation>
</comment>
<comment type="alternative products">
    <event type="alternative splicing"/>
    <isoform>
        <id>Q6P1L6-1</id>
        <name>1</name>
        <sequence type="displayed"/>
    </isoform>
    <isoform>
        <id>Q6P1L6-2</id>
        <name>2</name>
        <sequence type="described" ref="VSP_016028"/>
    </isoform>
    <isoform>
        <id>Q6P1L6-3</id>
        <name>3</name>
        <sequence type="described" ref="VSP_016029 VSP_016030"/>
    </isoform>
</comment>
<comment type="similarity">
    <text evidence="6">Belongs to the krueppel C2H2-type zinc-finger protein family.</text>
</comment>
<keyword id="KW-0025">Alternative splicing</keyword>
<keyword id="KW-0238">DNA-binding</keyword>
<keyword id="KW-1017">Isopeptide bond</keyword>
<keyword id="KW-0479">Metal-binding</keyword>
<keyword id="KW-0539">Nucleus</keyword>
<keyword id="KW-1267">Proteomics identification</keyword>
<keyword id="KW-1185">Reference proteome</keyword>
<keyword id="KW-0677">Repeat</keyword>
<keyword id="KW-0804">Transcription</keyword>
<keyword id="KW-0805">Transcription regulation</keyword>
<keyword id="KW-0832">Ubl conjugation</keyword>
<keyword id="KW-0862">Zinc</keyword>
<keyword id="KW-0863">Zinc-finger</keyword>
<name>ZN343_HUMAN</name>
<gene>
    <name type="primary">ZNF343</name>
</gene>
<organism>
    <name type="scientific">Homo sapiens</name>
    <name type="common">Human</name>
    <dbReference type="NCBI Taxonomy" id="9606"/>
    <lineage>
        <taxon>Eukaryota</taxon>
        <taxon>Metazoa</taxon>
        <taxon>Chordata</taxon>
        <taxon>Craniata</taxon>
        <taxon>Vertebrata</taxon>
        <taxon>Euteleostomi</taxon>
        <taxon>Mammalia</taxon>
        <taxon>Eutheria</taxon>
        <taxon>Euarchontoglires</taxon>
        <taxon>Primates</taxon>
        <taxon>Haplorrhini</taxon>
        <taxon>Catarrhini</taxon>
        <taxon>Hominidae</taxon>
        <taxon>Homo</taxon>
    </lineage>
</organism>
<reference key="1">
    <citation type="journal article" date="2004" name="Nat. Genet.">
        <title>Complete sequencing and characterization of 21,243 full-length human cDNAs.</title>
        <authorList>
            <person name="Ota T."/>
            <person name="Suzuki Y."/>
            <person name="Nishikawa T."/>
            <person name="Otsuki T."/>
            <person name="Sugiyama T."/>
            <person name="Irie R."/>
            <person name="Wakamatsu A."/>
            <person name="Hayashi K."/>
            <person name="Sato H."/>
            <person name="Nagai K."/>
            <person name="Kimura K."/>
            <person name="Makita H."/>
            <person name="Sekine M."/>
            <person name="Obayashi M."/>
            <person name="Nishi T."/>
            <person name="Shibahara T."/>
            <person name="Tanaka T."/>
            <person name="Ishii S."/>
            <person name="Yamamoto J."/>
            <person name="Saito K."/>
            <person name="Kawai Y."/>
            <person name="Isono Y."/>
            <person name="Nakamura Y."/>
            <person name="Nagahari K."/>
            <person name="Murakami K."/>
            <person name="Yasuda T."/>
            <person name="Iwayanagi T."/>
            <person name="Wagatsuma M."/>
            <person name="Shiratori A."/>
            <person name="Sudo H."/>
            <person name="Hosoiri T."/>
            <person name="Kaku Y."/>
            <person name="Kodaira H."/>
            <person name="Kondo H."/>
            <person name="Sugawara M."/>
            <person name="Takahashi M."/>
            <person name="Kanda K."/>
            <person name="Yokoi T."/>
            <person name="Furuya T."/>
            <person name="Kikkawa E."/>
            <person name="Omura Y."/>
            <person name="Abe K."/>
            <person name="Kamihara K."/>
            <person name="Katsuta N."/>
            <person name="Sato K."/>
            <person name="Tanikawa M."/>
            <person name="Yamazaki M."/>
            <person name="Ninomiya K."/>
            <person name="Ishibashi T."/>
            <person name="Yamashita H."/>
            <person name="Murakawa K."/>
            <person name="Fujimori K."/>
            <person name="Tanai H."/>
            <person name="Kimata M."/>
            <person name="Watanabe M."/>
            <person name="Hiraoka S."/>
            <person name="Chiba Y."/>
            <person name="Ishida S."/>
            <person name="Ono Y."/>
            <person name="Takiguchi S."/>
            <person name="Watanabe S."/>
            <person name="Yosida M."/>
            <person name="Hotuta T."/>
            <person name="Kusano J."/>
            <person name="Kanehori K."/>
            <person name="Takahashi-Fujii A."/>
            <person name="Hara H."/>
            <person name="Tanase T.-O."/>
            <person name="Nomura Y."/>
            <person name="Togiya S."/>
            <person name="Komai F."/>
            <person name="Hara R."/>
            <person name="Takeuchi K."/>
            <person name="Arita M."/>
            <person name="Imose N."/>
            <person name="Musashino K."/>
            <person name="Yuuki H."/>
            <person name="Oshima A."/>
            <person name="Sasaki N."/>
            <person name="Aotsuka S."/>
            <person name="Yoshikawa Y."/>
            <person name="Matsunawa H."/>
            <person name="Ichihara T."/>
            <person name="Shiohata N."/>
            <person name="Sano S."/>
            <person name="Moriya S."/>
            <person name="Momiyama H."/>
            <person name="Satoh N."/>
            <person name="Takami S."/>
            <person name="Terashima Y."/>
            <person name="Suzuki O."/>
            <person name="Nakagawa S."/>
            <person name="Senoh A."/>
            <person name="Mizoguchi H."/>
            <person name="Goto Y."/>
            <person name="Shimizu F."/>
            <person name="Wakebe H."/>
            <person name="Hishigaki H."/>
            <person name="Watanabe T."/>
            <person name="Sugiyama A."/>
            <person name="Takemoto M."/>
            <person name="Kawakami B."/>
            <person name="Yamazaki M."/>
            <person name="Watanabe K."/>
            <person name="Kumagai A."/>
            <person name="Itakura S."/>
            <person name="Fukuzumi Y."/>
            <person name="Fujimori Y."/>
            <person name="Komiyama M."/>
            <person name="Tashiro H."/>
            <person name="Tanigami A."/>
            <person name="Fujiwara T."/>
            <person name="Ono T."/>
            <person name="Yamada K."/>
            <person name="Fujii Y."/>
            <person name="Ozaki K."/>
            <person name="Hirao M."/>
            <person name="Ohmori Y."/>
            <person name="Kawabata A."/>
            <person name="Hikiji T."/>
            <person name="Kobatake N."/>
            <person name="Inagaki H."/>
            <person name="Ikema Y."/>
            <person name="Okamoto S."/>
            <person name="Okitani R."/>
            <person name="Kawakami T."/>
            <person name="Noguchi S."/>
            <person name="Itoh T."/>
            <person name="Shigeta K."/>
            <person name="Senba T."/>
            <person name="Matsumura K."/>
            <person name="Nakajima Y."/>
            <person name="Mizuno T."/>
            <person name="Morinaga M."/>
            <person name="Sasaki M."/>
            <person name="Togashi T."/>
            <person name="Oyama M."/>
            <person name="Hata H."/>
            <person name="Watanabe M."/>
            <person name="Komatsu T."/>
            <person name="Mizushima-Sugano J."/>
            <person name="Satoh T."/>
            <person name="Shirai Y."/>
            <person name="Takahashi Y."/>
            <person name="Nakagawa K."/>
            <person name="Okumura K."/>
            <person name="Nagase T."/>
            <person name="Nomura N."/>
            <person name="Kikuchi H."/>
            <person name="Masuho Y."/>
            <person name="Yamashita R."/>
            <person name="Nakai K."/>
            <person name="Yada T."/>
            <person name="Nakamura Y."/>
            <person name="Ohara O."/>
            <person name="Isogai T."/>
            <person name="Sugano S."/>
        </authorList>
    </citation>
    <scope>NUCLEOTIDE SEQUENCE [LARGE SCALE MRNA] (ISOFORMS 1 AND 2)</scope>
    <source>
        <tissue>Kidney</tissue>
        <tissue>Neuroblastoma</tissue>
    </source>
</reference>
<reference key="2">
    <citation type="journal article" date="2001" name="Nature">
        <title>The DNA sequence and comparative analysis of human chromosome 20.</title>
        <authorList>
            <person name="Deloukas P."/>
            <person name="Matthews L.H."/>
            <person name="Ashurst J.L."/>
            <person name="Burton J."/>
            <person name="Gilbert J.G.R."/>
            <person name="Jones M."/>
            <person name="Stavrides G."/>
            <person name="Almeida J.P."/>
            <person name="Babbage A.K."/>
            <person name="Bagguley C.L."/>
            <person name="Bailey J."/>
            <person name="Barlow K.F."/>
            <person name="Bates K.N."/>
            <person name="Beard L.M."/>
            <person name="Beare D.M."/>
            <person name="Beasley O.P."/>
            <person name="Bird C.P."/>
            <person name="Blakey S.E."/>
            <person name="Bridgeman A.M."/>
            <person name="Brown A.J."/>
            <person name="Buck D."/>
            <person name="Burrill W.D."/>
            <person name="Butler A.P."/>
            <person name="Carder C."/>
            <person name="Carter N.P."/>
            <person name="Chapman J.C."/>
            <person name="Clamp M."/>
            <person name="Clark G."/>
            <person name="Clark L.N."/>
            <person name="Clark S.Y."/>
            <person name="Clee C.M."/>
            <person name="Clegg S."/>
            <person name="Cobley V.E."/>
            <person name="Collier R.E."/>
            <person name="Connor R.E."/>
            <person name="Corby N.R."/>
            <person name="Coulson A."/>
            <person name="Coville G.J."/>
            <person name="Deadman R."/>
            <person name="Dhami P.D."/>
            <person name="Dunn M."/>
            <person name="Ellington A.G."/>
            <person name="Frankland J.A."/>
            <person name="Fraser A."/>
            <person name="French L."/>
            <person name="Garner P."/>
            <person name="Grafham D.V."/>
            <person name="Griffiths C."/>
            <person name="Griffiths M.N.D."/>
            <person name="Gwilliam R."/>
            <person name="Hall R.E."/>
            <person name="Hammond S."/>
            <person name="Harley J.L."/>
            <person name="Heath P.D."/>
            <person name="Ho S."/>
            <person name="Holden J.L."/>
            <person name="Howden P.J."/>
            <person name="Huckle E."/>
            <person name="Hunt A.R."/>
            <person name="Hunt S.E."/>
            <person name="Jekosch K."/>
            <person name="Johnson C.M."/>
            <person name="Johnson D."/>
            <person name="Kay M.P."/>
            <person name="Kimberley A.M."/>
            <person name="King A."/>
            <person name="Knights A."/>
            <person name="Laird G.K."/>
            <person name="Lawlor S."/>
            <person name="Lehvaeslaiho M.H."/>
            <person name="Leversha M.A."/>
            <person name="Lloyd C."/>
            <person name="Lloyd D.M."/>
            <person name="Lovell J.D."/>
            <person name="Marsh V.L."/>
            <person name="Martin S.L."/>
            <person name="McConnachie L.J."/>
            <person name="McLay K."/>
            <person name="McMurray A.A."/>
            <person name="Milne S.A."/>
            <person name="Mistry D."/>
            <person name="Moore M.J.F."/>
            <person name="Mullikin J.C."/>
            <person name="Nickerson T."/>
            <person name="Oliver K."/>
            <person name="Parker A."/>
            <person name="Patel R."/>
            <person name="Pearce T.A.V."/>
            <person name="Peck A.I."/>
            <person name="Phillimore B.J.C.T."/>
            <person name="Prathalingam S.R."/>
            <person name="Plumb R.W."/>
            <person name="Ramsay H."/>
            <person name="Rice C.M."/>
            <person name="Ross M.T."/>
            <person name="Scott C.E."/>
            <person name="Sehra H.K."/>
            <person name="Shownkeen R."/>
            <person name="Sims S."/>
            <person name="Skuce C.D."/>
            <person name="Smith M.L."/>
            <person name="Soderlund C."/>
            <person name="Steward C.A."/>
            <person name="Sulston J.E."/>
            <person name="Swann R.M."/>
            <person name="Sycamore N."/>
            <person name="Taylor R."/>
            <person name="Tee L."/>
            <person name="Thomas D.W."/>
            <person name="Thorpe A."/>
            <person name="Tracey A."/>
            <person name="Tromans A.C."/>
            <person name="Vaudin M."/>
            <person name="Wall M."/>
            <person name="Wallis J.M."/>
            <person name="Whitehead S.L."/>
            <person name="Whittaker P."/>
            <person name="Willey D.L."/>
            <person name="Williams L."/>
            <person name="Williams S.A."/>
            <person name="Wilming L."/>
            <person name="Wray P.W."/>
            <person name="Hubbard T."/>
            <person name="Durbin R.M."/>
            <person name="Bentley D.R."/>
            <person name="Beck S."/>
            <person name="Rogers J."/>
        </authorList>
    </citation>
    <scope>NUCLEOTIDE SEQUENCE [LARGE SCALE GENOMIC DNA]</scope>
</reference>
<reference key="3">
    <citation type="journal article" date="2004" name="Genome Res.">
        <title>The status, quality, and expansion of the NIH full-length cDNA project: the Mammalian Gene Collection (MGC).</title>
        <authorList>
            <consortium name="The MGC Project Team"/>
        </authorList>
    </citation>
    <scope>NUCLEOTIDE SEQUENCE [LARGE SCALE MRNA] (ISOFORMS 1 AND 3)</scope>
    <source>
        <tissue>Lung</tissue>
        <tissue>Skin</tissue>
        <tissue>Uterus</tissue>
    </source>
</reference>
<reference key="4">
    <citation type="journal article" date="2017" name="Nat. Struct. Mol. Biol.">
        <title>Site-specific mapping of the human SUMO proteome reveals co-modification with phosphorylation.</title>
        <authorList>
            <person name="Hendriks I.A."/>
            <person name="Lyon D."/>
            <person name="Young C."/>
            <person name="Jensen L.J."/>
            <person name="Vertegaal A.C."/>
            <person name="Nielsen M.L."/>
        </authorList>
    </citation>
    <scope>SUMOYLATION [LARGE SCALE ANALYSIS] AT LYS-435</scope>
    <scope>IDENTIFICATION BY MASS SPECTROMETRY [LARGE SCALE ANALYSIS]</scope>
</reference>
<dbReference type="EMBL" id="AK055734">
    <property type="protein sequence ID" value="BAB71000.1"/>
    <property type="molecule type" value="mRNA"/>
</dbReference>
<dbReference type="EMBL" id="AK096911">
    <property type="protein sequence ID" value="BAC04892.1"/>
    <property type="molecule type" value="mRNA"/>
</dbReference>
<dbReference type="EMBL" id="AL049650">
    <property type="status" value="NOT_ANNOTATED_CDS"/>
    <property type="molecule type" value="Genomic_DNA"/>
</dbReference>
<dbReference type="EMBL" id="BC002897">
    <property type="protein sequence ID" value="AAH02897.1"/>
    <property type="molecule type" value="mRNA"/>
</dbReference>
<dbReference type="EMBL" id="BC011862">
    <property type="protein sequence ID" value="AAH11862.2"/>
    <property type="molecule type" value="mRNA"/>
</dbReference>
<dbReference type="EMBL" id="BC065009">
    <property type="protein sequence ID" value="AAH65009.1"/>
    <property type="molecule type" value="mRNA"/>
</dbReference>
<dbReference type="CCDS" id="CCDS13028.1">
    <molecule id="Q6P1L6-1"/>
</dbReference>
<dbReference type="CCDS" id="CCDS74692.1">
    <molecule id="Q6P1L6-2"/>
</dbReference>
<dbReference type="CCDS" id="CCDS74694.1">
    <molecule id="Q6P1L6-3"/>
</dbReference>
<dbReference type="RefSeq" id="NP_001269424.1">
    <molecule id="Q6P1L6-1"/>
    <property type="nucleotide sequence ID" value="NM_001282495.1"/>
</dbReference>
<dbReference type="RefSeq" id="NP_001269425.1">
    <molecule id="Q6P1L6-1"/>
    <property type="nucleotide sequence ID" value="NM_001282496.2"/>
</dbReference>
<dbReference type="RefSeq" id="NP_001269426.1">
    <property type="nucleotide sequence ID" value="NM_001282497.1"/>
</dbReference>
<dbReference type="RefSeq" id="NP_001269427.1">
    <molecule id="Q6P1L6-2"/>
    <property type="nucleotide sequence ID" value="NM_001282498.2"/>
</dbReference>
<dbReference type="RefSeq" id="NP_001269428.1">
    <molecule id="Q6P1L6-3"/>
    <property type="nucleotide sequence ID" value="NM_001282499.3"/>
</dbReference>
<dbReference type="RefSeq" id="NP_001308729.1">
    <molecule id="Q6P1L6-1"/>
    <property type="nucleotide sequence ID" value="NM_001321800.2"/>
</dbReference>
<dbReference type="RefSeq" id="NP_001308730.1">
    <property type="nucleotide sequence ID" value="NM_001321801.1"/>
</dbReference>
<dbReference type="RefSeq" id="NP_001308731.1">
    <property type="nucleotide sequence ID" value="NM_001321802.1"/>
</dbReference>
<dbReference type="RefSeq" id="NP_001308732.1">
    <property type="nucleotide sequence ID" value="NM_001321803.1"/>
</dbReference>
<dbReference type="RefSeq" id="NP_001308734.1">
    <property type="nucleotide sequence ID" value="NM_001321805.1"/>
</dbReference>
<dbReference type="RefSeq" id="NP_077301.4">
    <molecule id="Q6P1L6-1"/>
    <property type="nucleotide sequence ID" value="NM_024325.5"/>
</dbReference>
<dbReference type="RefSeq" id="XP_016883551.1">
    <property type="nucleotide sequence ID" value="XM_017028062.1"/>
</dbReference>
<dbReference type="RefSeq" id="XP_047296432.1">
    <molecule id="Q6P1L6-1"/>
    <property type="nucleotide sequence ID" value="XM_047440476.1"/>
</dbReference>
<dbReference type="RefSeq" id="XP_054179962.1">
    <molecule id="Q6P1L6-1"/>
    <property type="nucleotide sequence ID" value="XM_054323987.1"/>
</dbReference>
<dbReference type="SMR" id="Q6P1L6"/>
<dbReference type="BioGRID" id="122592">
    <property type="interactions" value="26"/>
</dbReference>
<dbReference type="FunCoup" id="Q6P1L6">
    <property type="interactions" value="115"/>
</dbReference>
<dbReference type="IntAct" id="Q6P1L6">
    <property type="interactions" value="24"/>
</dbReference>
<dbReference type="STRING" id="9606.ENSP00000482819"/>
<dbReference type="iPTMnet" id="Q6P1L6"/>
<dbReference type="PhosphoSitePlus" id="Q6P1L6"/>
<dbReference type="BioMuta" id="ZNF343"/>
<dbReference type="DMDM" id="74762346"/>
<dbReference type="jPOST" id="Q6P1L6"/>
<dbReference type="MassIVE" id="Q6P1L6"/>
<dbReference type="PeptideAtlas" id="Q6P1L6"/>
<dbReference type="ProteomicsDB" id="66845">
    <molecule id="Q6P1L6-1"/>
</dbReference>
<dbReference type="ProteomicsDB" id="66846">
    <molecule id="Q6P1L6-2"/>
</dbReference>
<dbReference type="Antibodypedia" id="23201">
    <property type="antibodies" value="23 antibodies from 9 providers"/>
</dbReference>
<dbReference type="DNASU" id="79175"/>
<dbReference type="Ensembl" id="ENST00000278772.9">
    <molecule id="Q6P1L6-1"/>
    <property type="protein sequence ID" value="ENSP00000278772.4"/>
    <property type="gene ID" value="ENSG00000088876.13"/>
</dbReference>
<dbReference type="Ensembl" id="ENST00000358413.6">
    <molecule id="Q6P1L6-3"/>
    <property type="protein sequence ID" value="ENSP00000351188.2"/>
    <property type="gene ID" value="ENSG00000088876.13"/>
</dbReference>
<dbReference type="Ensembl" id="ENST00000381253.5">
    <molecule id="Q6P1L6-3"/>
    <property type="protein sequence ID" value="ENSP00000370652.1"/>
    <property type="gene ID" value="ENSG00000088876.13"/>
</dbReference>
<dbReference type="Ensembl" id="ENST00000617391.4">
    <molecule id="Q6P1L6-2"/>
    <property type="protein sequence ID" value="ENSP00000483851.1"/>
    <property type="gene ID" value="ENSG00000088876.13"/>
</dbReference>
<dbReference type="GeneID" id="79175"/>
<dbReference type="KEGG" id="hsa:79175"/>
<dbReference type="MANE-Select" id="ENST00000278772.9">
    <property type="protein sequence ID" value="ENSP00000278772.4"/>
    <property type="RefSeq nucleotide sequence ID" value="NM_024325.6"/>
    <property type="RefSeq protein sequence ID" value="NP_077301.4"/>
</dbReference>
<dbReference type="UCSC" id="uc002wge.2">
    <molecule id="Q6P1L6-1"/>
    <property type="organism name" value="human"/>
</dbReference>
<dbReference type="AGR" id="HGNC:16017"/>
<dbReference type="CTD" id="79175"/>
<dbReference type="DisGeNET" id="79175"/>
<dbReference type="GeneCards" id="ZNF343"/>
<dbReference type="HGNC" id="HGNC:16017">
    <property type="gene designation" value="ZNF343"/>
</dbReference>
<dbReference type="HPA" id="ENSG00000088876">
    <property type="expression patterns" value="Low tissue specificity"/>
</dbReference>
<dbReference type="neXtProt" id="NX_Q6P1L6"/>
<dbReference type="OpenTargets" id="ENSG00000088876"/>
<dbReference type="PharmGKB" id="PA38081"/>
<dbReference type="VEuPathDB" id="HostDB:ENSG00000088876"/>
<dbReference type="eggNOG" id="KOG1721">
    <property type="taxonomic scope" value="Eukaryota"/>
</dbReference>
<dbReference type="GeneTree" id="ENSGT00940000163290"/>
<dbReference type="HOGENOM" id="CLU_002678_44_5_1"/>
<dbReference type="InParanoid" id="Q6P1L6"/>
<dbReference type="OMA" id="MPFVCKE"/>
<dbReference type="OrthoDB" id="9892686at2759"/>
<dbReference type="PAN-GO" id="Q6P1L6">
    <property type="GO annotations" value="3 GO annotations based on evolutionary models"/>
</dbReference>
<dbReference type="PhylomeDB" id="Q6P1L6"/>
<dbReference type="TreeFam" id="TF338096"/>
<dbReference type="PathwayCommons" id="Q6P1L6"/>
<dbReference type="Reactome" id="R-HSA-212436">
    <property type="pathway name" value="Generic Transcription Pathway"/>
</dbReference>
<dbReference type="SignaLink" id="Q6P1L6"/>
<dbReference type="BioGRID-ORCS" id="79175">
    <property type="hits" value="17 hits in 1180 CRISPR screens"/>
</dbReference>
<dbReference type="ChiTaRS" id="ZNF343">
    <property type="organism name" value="human"/>
</dbReference>
<dbReference type="GenomeRNAi" id="79175"/>
<dbReference type="Pharos" id="Q6P1L6">
    <property type="development level" value="Tdark"/>
</dbReference>
<dbReference type="PRO" id="PR:Q6P1L6"/>
<dbReference type="Proteomes" id="UP000005640">
    <property type="component" value="Chromosome 20"/>
</dbReference>
<dbReference type="RNAct" id="Q6P1L6">
    <property type="molecule type" value="protein"/>
</dbReference>
<dbReference type="Bgee" id="ENSG00000088876">
    <property type="expression patterns" value="Expressed in tibialis anterior and 141 other cell types or tissues"/>
</dbReference>
<dbReference type="ExpressionAtlas" id="Q6P1L6">
    <property type="expression patterns" value="baseline and differential"/>
</dbReference>
<dbReference type="GO" id="GO:0005634">
    <property type="term" value="C:nucleus"/>
    <property type="evidence" value="ECO:0000318"/>
    <property type="project" value="GO_Central"/>
</dbReference>
<dbReference type="GO" id="GO:0000981">
    <property type="term" value="F:DNA-binding transcription factor activity, RNA polymerase II-specific"/>
    <property type="evidence" value="ECO:0000318"/>
    <property type="project" value="GO_Central"/>
</dbReference>
<dbReference type="GO" id="GO:0000977">
    <property type="term" value="F:RNA polymerase II transcription regulatory region sequence-specific DNA binding"/>
    <property type="evidence" value="ECO:0000318"/>
    <property type="project" value="GO_Central"/>
</dbReference>
<dbReference type="GO" id="GO:1990837">
    <property type="term" value="F:sequence-specific double-stranded DNA binding"/>
    <property type="evidence" value="ECO:0000314"/>
    <property type="project" value="ARUK-UCL"/>
</dbReference>
<dbReference type="GO" id="GO:0008270">
    <property type="term" value="F:zinc ion binding"/>
    <property type="evidence" value="ECO:0007669"/>
    <property type="project" value="UniProtKB-KW"/>
</dbReference>
<dbReference type="GO" id="GO:0006357">
    <property type="term" value="P:regulation of transcription by RNA polymerase II"/>
    <property type="evidence" value="ECO:0000318"/>
    <property type="project" value="GO_Central"/>
</dbReference>
<dbReference type="CDD" id="cd07765">
    <property type="entry name" value="KRAB_A-box"/>
    <property type="match status" value="1"/>
</dbReference>
<dbReference type="FunFam" id="3.30.160.60:FF:000601">
    <property type="entry name" value="Histone-lysine N-methyltransferase PRDM9"/>
    <property type="match status" value="1"/>
</dbReference>
<dbReference type="FunFam" id="3.30.160.60:FF:000155">
    <property type="entry name" value="zinc finger protein 133 isoform X1"/>
    <property type="match status" value="5"/>
</dbReference>
<dbReference type="FunFam" id="3.30.160.60:FF:000189">
    <property type="entry name" value="zinc finger protein 133 isoform X1"/>
    <property type="match status" value="2"/>
</dbReference>
<dbReference type="FunFam" id="3.30.160.60:FF:001623">
    <property type="entry name" value="Zinc finger protein 169"/>
    <property type="match status" value="1"/>
</dbReference>
<dbReference type="FunFam" id="3.30.160.60:FF:000704">
    <property type="entry name" value="zinc finger protein 169 isoform X2"/>
    <property type="match status" value="1"/>
</dbReference>
<dbReference type="FunFam" id="3.30.160.60:FF:002343">
    <property type="entry name" value="Zinc finger protein 33A"/>
    <property type="match status" value="1"/>
</dbReference>
<dbReference type="FunFam" id="3.30.160.60:FF:000212">
    <property type="entry name" value="zinc finger protein 382 isoform X2"/>
    <property type="match status" value="1"/>
</dbReference>
<dbReference type="Gene3D" id="6.10.140.140">
    <property type="match status" value="1"/>
</dbReference>
<dbReference type="Gene3D" id="3.30.160.60">
    <property type="entry name" value="Classic Zinc Finger"/>
    <property type="match status" value="13"/>
</dbReference>
<dbReference type="InterPro" id="IPR050589">
    <property type="entry name" value="Ikaros_C2H2-ZF"/>
</dbReference>
<dbReference type="InterPro" id="IPR001909">
    <property type="entry name" value="KRAB"/>
</dbReference>
<dbReference type="InterPro" id="IPR036051">
    <property type="entry name" value="KRAB_dom_sf"/>
</dbReference>
<dbReference type="InterPro" id="IPR048414">
    <property type="entry name" value="PDRM9-like_Znf-C2H2"/>
</dbReference>
<dbReference type="InterPro" id="IPR036236">
    <property type="entry name" value="Znf_C2H2_sf"/>
</dbReference>
<dbReference type="InterPro" id="IPR013087">
    <property type="entry name" value="Znf_C2H2_type"/>
</dbReference>
<dbReference type="PANTHER" id="PTHR24404">
    <property type="entry name" value="ZINC FINGER PROTEIN"/>
    <property type="match status" value="1"/>
</dbReference>
<dbReference type="PANTHER" id="PTHR24404:SF41">
    <property type="entry name" value="ZINC FINGER PROTEIN 613"/>
    <property type="match status" value="1"/>
</dbReference>
<dbReference type="Pfam" id="PF01352">
    <property type="entry name" value="KRAB"/>
    <property type="match status" value="1"/>
</dbReference>
<dbReference type="Pfam" id="PF00096">
    <property type="entry name" value="zf-C2H2"/>
    <property type="match status" value="11"/>
</dbReference>
<dbReference type="Pfam" id="PF21225">
    <property type="entry name" value="zf-C2H2_5"/>
    <property type="match status" value="1"/>
</dbReference>
<dbReference type="SMART" id="SM00349">
    <property type="entry name" value="KRAB"/>
    <property type="match status" value="1"/>
</dbReference>
<dbReference type="SMART" id="SM00355">
    <property type="entry name" value="ZnF_C2H2"/>
    <property type="match status" value="12"/>
</dbReference>
<dbReference type="SUPFAM" id="SSF57667">
    <property type="entry name" value="beta-beta-alpha zinc fingers"/>
    <property type="match status" value="7"/>
</dbReference>
<dbReference type="SUPFAM" id="SSF109640">
    <property type="entry name" value="KRAB domain (Kruppel-associated box)"/>
    <property type="match status" value="1"/>
</dbReference>
<dbReference type="PROSITE" id="PS50805">
    <property type="entry name" value="KRAB"/>
    <property type="match status" value="1"/>
</dbReference>
<dbReference type="PROSITE" id="PS00028">
    <property type="entry name" value="ZINC_FINGER_C2H2_1"/>
    <property type="match status" value="12"/>
</dbReference>
<dbReference type="PROSITE" id="PS50157">
    <property type="entry name" value="ZINC_FINGER_C2H2_2"/>
    <property type="match status" value="12"/>
</dbReference>